<evidence type="ECO:0000255" key="1">
    <source>
        <dbReference type="HAMAP-Rule" id="MF_01580"/>
    </source>
</evidence>
<evidence type="ECO:0000305" key="2"/>
<comment type="function">
    <text evidence="1">Activates the cell division inhibited by chromosomal DNA over-replication.</text>
</comment>
<comment type="similarity">
    <text evidence="1">Belongs to the CedA family.</text>
</comment>
<comment type="sequence caution" evidence="2">
    <conflict type="erroneous initiation">
        <sequence resource="EMBL-CDS" id="ABJ01102"/>
    </conflict>
</comment>
<gene>
    <name evidence="1" type="primary">cedA</name>
    <name type="ordered locus">Ecok1_16080</name>
    <name type="ORF">APECO1_800</name>
</gene>
<protein>
    <recommendedName>
        <fullName evidence="1">Cell division activator CedA</fullName>
    </recommendedName>
</protein>
<keyword id="KW-0131">Cell cycle</keyword>
<keyword id="KW-0132">Cell division</keyword>
<keyword id="KW-0238">DNA-binding</keyword>
<keyword id="KW-1185">Reference proteome</keyword>
<feature type="chain" id="PRO_0000300210" description="Cell division activator CedA">
    <location>
        <begin position="1"/>
        <end position="80"/>
    </location>
</feature>
<dbReference type="EMBL" id="CP000468">
    <property type="protein sequence ID" value="ABJ01102.1"/>
    <property type="status" value="ALT_INIT"/>
    <property type="molecule type" value="Genomic_DNA"/>
</dbReference>
<dbReference type="BMRB" id="A1ABR2"/>
<dbReference type="SMR" id="A1ABR2"/>
<dbReference type="KEGG" id="ecv:APECO1_800"/>
<dbReference type="HOGENOM" id="CLU_167445_0_0_6"/>
<dbReference type="Proteomes" id="UP000008216">
    <property type="component" value="Chromosome"/>
</dbReference>
<dbReference type="GO" id="GO:0003677">
    <property type="term" value="F:DNA binding"/>
    <property type="evidence" value="ECO:0007669"/>
    <property type="project" value="UniProtKB-UniRule"/>
</dbReference>
<dbReference type="GO" id="GO:0051301">
    <property type="term" value="P:cell division"/>
    <property type="evidence" value="ECO:0007669"/>
    <property type="project" value="UniProtKB-UniRule"/>
</dbReference>
<dbReference type="Gene3D" id="3.30.730.20">
    <property type="entry name" value="Cell division activator CedA"/>
    <property type="match status" value="1"/>
</dbReference>
<dbReference type="HAMAP" id="MF_01580">
    <property type="entry name" value="CedA"/>
    <property type="match status" value="1"/>
</dbReference>
<dbReference type="InterPro" id="IPR038463">
    <property type="entry name" value="CedA-like_sf"/>
</dbReference>
<dbReference type="InterPro" id="IPR019666">
    <property type="entry name" value="Cell_div_activator_CedA"/>
</dbReference>
<dbReference type="NCBIfam" id="NF007510">
    <property type="entry name" value="PRK10113.1"/>
    <property type="match status" value="1"/>
</dbReference>
<dbReference type="Pfam" id="PF10729">
    <property type="entry name" value="CedA"/>
    <property type="match status" value="1"/>
</dbReference>
<name>CEDA_ECOK1</name>
<accession>A1ABR2</accession>
<sequence length="80" mass="9462">MKKPLRQQNRQIISYVPRTEPAPPEHAIKMDSFRDVWMLRGKYVAFVLMGESFLRSPAFTVPESAQRWANQIRQENEVEE</sequence>
<proteinExistence type="inferred from homology"/>
<organism>
    <name type="scientific">Escherichia coli O1:K1 / APEC</name>
    <dbReference type="NCBI Taxonomy" id="405955"/>
    <lineage>
        <taxon>Bacteria</taxon>
        <taxon>Pseudomonadati</taxon>
        <taxon>Pseudomonadota</taxon>
        <taxon>Gammaproteobacteria</taxon>
        <taxon>Enterobacterales</taxon>
        <taxon>Enterobacteriaceae</taxon>
        <taxon>Escherichia</taxon>
    </lineage>
</organism>
<reference key="1">
    <citation type="journal article" date="2007" name="J. Bacteriol.">
        <title>The genome sequence of avian pathogenic Escherichia coli strain O1:K1:H7 shares strong similarities with human extraintestinal pathogenic E. coli genomes.</title>
        <authorList>
            <person name="Johnson T.J."/>
            <person name="Kariyawasam S."/>
            <person name="Wannemuehler Y."/>
            <person name="Mangiamele P."/>
            <person name="Johnson S.J."/>
            <person name="Doetkott C."/>
            <person name="Skyberg J.A."/>
            <person name="Lynne A.M."/>
            <person name="Johnson J.R."/>
            <person name="Nolan L.K."/>
        </authorList>
    </citation>
    <scope>NUCLEOTIDE SEQUENCE [LARGE SCALE GENOMIC DNA]</scope>
</reference>